<keyword id="KW-0560">Oxidoreductase</keyword>
<reference key="1">
    <citation type="journal article" date="2009" name="Environ. Microbiol.">
        <title>Contribution of mobile genetic elements to Desulfovibrio vulgaris genome plasticity.</title>
        <authorList>
            <person name="Walker C.B."/>
            <person name="Stolyar S."/>
            <person name="Chivian D."/>
            <person name="Pinel N."/>
            <person name="Gabster J.A."/>
            <person name="Dehal P.S."/>
            <person name="He Z."/>
            <person name="Yang Z.K."/>
            <person name="Yen H.C."/>
            <person name="Zhou J."/>
            <person name="Wall J.D."/>
            <person name="Hazen T.C."/>
            <person name="Arkin A.P."/>
            <person name="Stahl D.A."/>
        </authorList>
    </citation>
    <scope>NUCLEOTIDE SEQUENCE [LARGE SCALE GENOMIC DNA]</scope>
    <source>
        <strain>DP4</strain>
    </source>
</reference>
<organism>
    <name type="scientific">Nitratidesulfovibrio vulgaris (strain DP4)</name>
    <name type="common">Desulfovibrio vulgaris</name>
    <dbReference type="NCBI Taxonomy" id="391774"/>
    <lineage>
        <taxon>Bacteria</taxon>
        <taxon>Pseudomonadati</taxon>
        <taxon>Thermodesulfobacteriota</taxon>
        <taxon>Desulfovibrionia</taxon>
        <taxon>Desulfovibrionales</taxon>
        <taxon>Desulfovibrionaceae</taxon>
        <taxon>Nitratidesulfovibrio</taxon>
    </lineage>
</organism>
<feature type="chain" id="PRO_1000045647" description="Probable glycine dehydrogenase (decarboxylating) subunit 1">
    <location>
        <begin position="1"/>
        <end position="443"/>
    </location>
</feature>
<dbReference type="EC" id="1.4.4.2" evidence="1"/>
<dbReference type="EMBL" id="CP000527">
    <property type="protein sequence ID" value="ABM28668.1"/>
    <property type="molecule type" value="Genomic_DNA"/>
</dbReference>
<dbReference type="RefSeq" id="WP_011792394.1">
    <property type="nucleotide sequence ID" value="NC_008751.1"/>
</dbReference>
<dbReference type="SMR" id="A1VE02"/>
<dbReference type="KEGG" id="dvl:Dvul_1651"/>
<dbReference type="HOGENOM" id="CLU_004620_0_2_7"/>
<dbReference type="Proteomes" id="UP000009173">
    <property type="component" value="Chromosome"/>
</dbReference>
<dbReference type="GO" id="GO:0004375">
    <property type="term" value="F:glycine dehydrogenase (decarboxylating) activity"/>
    <property type="evidence" value="ECO:0007669"/>
    <property type="project" value="UniProtKB-EC"/>
</dbReference>
<dbReference type="GO" id="GO:0019464">
    <property type="term" value="P:glycine decarboxylation via glycine cleavage system"/>
    <property type="evidence" value="ECO:0007669"/>
    <property type="project" value="UniProtKB-UniRule"/>
</dbReference>
<dbReference type="GO" id="GO:0009116">
    <property type="term" value="P:nucleoside metabolic process"/>
    <property type="evidence" value="ECO:0007669"/>
    <property type="project" value="InterPro"/>
</dbReference>
<dbReference type="CDD" id="cd00613">
    <property type="entry name" value="GDC-P"/>
    <property type="match status" value="1"/>
</dbReference>
<dbReference type="Gene3D" id="3.90.1150.10">
    <property type="entry name" value="Aspartate Aminotransferase, domain 1"/>
    <property type="match status" value="1"/>
</dbReference>
<dbReference type="Gene3D" id="3.40.640.10">
    <property type="entry name" value="Type I PLP-dependent aspartate aminotransferase-like (Major domain)"/>
    <property type="match status" value="1"/>
</dbReference>
<dbReference type="HAMAP" id="MF_00712">
    <property type="entry name" value="GcvPA"/>
    <property type="match status" value="1"/>
</dbReference>
<dbReference type="InterPro" id="IPR023010">
    <property type="entry name" value="GcvPA"/>
</dbReference>
<dbReference type="InterPro" id="IPR049315">
    <property type="entry name" value="GDC-P_N"/>
</dbReference>
<dbReference type="InterPro" id="IPR020581">
    <property type="entry name" value="GDC_P"/>
</dbReference>
<dbReference type="InterPro" id="IPR015424">
    <property type="entry name" value="PyrdxlP-dep_Trfase"/>
</dbReference>
<dbReference type="InterPro" id="IPR015421">
    <property type="entry name" value="PyrdxlP-dep_Trfase_major"/>
</dbReference>
<dbReference type="InterPro" id="IPR015422">
    <property type="entry name" value="PyrdxlP-dep_Trfase_small"/>
</dbReference>
<dbReference type="NCBIfam" id="NF001696">
    <property type="entry name" value="PRK00451.1"/>
    <property type="match status" value="1"/>
</dbReference>
<dbReference type="PANTHER" id="PTHR42806">
    <property type="entry name" value="GLYCINE CLEAVAGE SYSTEM P-PROTEIN"/>
    <property type="match status" value="1"/>
</dbReference>
<dbReference type="PANTHER" id="PTHR42806:SF1">
    <property type="entry name" value="GLYCINE DEHYDROGENASE (DECARBOXYLATING)"/>
    <property type="match status" value="1"/>
</dbReference>
<dbReference type="Pfam" id="PF02347">
    <property type="entry name" value="GDC-P"/>
    <property type="match status" value="1"/>
</dbReference>
<dbReference type="PIRSF" id="PIRSF006815">
    <property type="entry name" value="GcvPA"/>
    <property type="match status" value="1"/>
</dbReference>
<dbReference type="SUPFAM" id="SSF53383">
    <property type="entry name" value="PLP-dependent transferases"/>
    <property type="match status" value="1"/>
</dbReference>
<proteinExistence type="inferred from homology"/>
<protein>
    <recommendedName>
        <fullName evidence="1">Probable glycine dehydrogenase (decarboxylating) subunit 1</fullName>
        <ecNumber evidence="1">1.4.4.2</ecNumber>
    </recommendedName>
    <alternativeName>
        <fullName evidence="1">Glycine cleavage system P-protein subunit 1</fullName>
    </alternativeName>
    <alternativeName>
        <fullName evidence="1">Glycine decarboxylase subunit 1</fullName>
    </alternativeName>
    <alternativeName>
        <fullName evidence="1">Glycine dehydrogenase (aminomethyl-transferring) subunit 1</fullName>
    </alternativeName>
</protein>
<gene>
    <name evidence="1" type="primary">gcvPA</name>
    <name type="ordered locus">Dvul_1651</name>
</gene>
<evidence type="ECO:0000255" key="1">
    <source>
        <dbReference type="HAMAP-Rule" id="MF_00712"/>
    </source>
</evidence>
<sequence>MPFVPHSPEDVSVMLDAIGVNTIEDLFADIPAEMRPKSFALPKGLSEMDVCSRLEALSARNRTDVVSFLGAGFYDHHIPKAVDALSSRGEFYTAYTPYQPEAAQGTLQAIFEFQTAVCRLLDMDCANASVYDGGSALFEAMMMAVRATRRRKLVIDEALSPIYRTMLASYTSNLQLELVTVPHRDGLPDMDALKASVDDTCAAVVVQNPNFFGAITDFTDLFTHARAHKALGVISVYPVMQSVLKTPGEMGADIAVADGQSIGQPLSFGGPYLGIMTCTKPLVRQIPGRIVGRTQDVDGRTGYVLTLQAREQHIRRAKATSNICSNQALCALRSLIHLTLLGPEGLVRTAELSMERARYAAERLTALPGVELLHDAPFGNEFAVRLPVSAFEVVDRLTARGYVPGFPVGRYYPGMDNVLLVACTEKHSFEQVGILAEMLGGIL</sequence>
<accession>A1VE02</accession>
<name>GCSPA_NITV4</name>
<comment type="function">
    <text evidence="1">The glycine cleavage system catalyzes the degradation of glycine. The P protein binds the alpha-amino group of glycine through its pyridoxal phosphate cofactor; CO(2) is released and the remaining methylamine moiety is then transferred to the lipoamide cofactor of the H protein.</text>
</comment>
<comment type="catalytic activity">
    <reaction evidence="1">
        <text>N(6)-[(R)-lipoyl]-L-lysyl-[glycine-cleavage complex H protein] + glycine + H(+) = N(6)-[(R)-S(8)-aminomethyldihydrolipoyl]-L-lysyl-[glycine-cleavage complex H protein] + CO2</text>
        <dbReference type="Rhea" id="RHEA:24304"/>
        <dbReference type="Rhea" id="RHEA-COMP:10494"/>
        <dbReference type="Rhea" id="RHEA-COMP:10495"/>
        <dbReference type="ChEBI" id="CHEBI:15378"/>
        <dbReference type="ChEBI" id="CHEBI:16526"/>
        <dbReference type="ChEBI" id="CHEBI:57305"/>
        <dbReference type="ChEBI" id="CHEBI:83099"/>
        <dbReference type="ChEBI" id="CHEBI:83143"/>
        <dbReference type="EC" id="1.4.4.2"/>
    </reaction>
</comment>
<comment type="subunit">
    <text evidence="1">The glycine cleavage system is composed of four proteins: P, T, L and H. In this organism, the P 'protein' is a heterodimer of two subunits.</text>
</comment>
<comment type="similarity">
    <text evidence="1">Belongs to the GcvP family. N-terminal subunit subfamily.</text>
</comment>